<accession>A1SX61</accession>
<reference key="1">
    <citation type="journal article" date="2008" name="BMC Genomics">
        <title>Genomics of an extreme psychrophile, Psychromonas ingrahamii.</title>
        <authorList>
            <person name="Riley M."/>
            <person name="Staley J.T."/>
            <person name="Danchin A."/>
            <person name="Wang T.Z."/>
            <person name="Brettin T.S."/>
            <person name="Hauser L.J."/>
            <person name="Land M.L."/>
            <person name="Thompson L.S."/>
        </authorList>
    </citation>
    <scope>NUCLEOTIDE SEQUENCE [LARGE SCALE GENOMIC DNA]</scope>
    <source>
        <strain>DSM 17664 / CCUG 51855 / 37</strain>
    </source>
</reference>
<gene>
    <name evidence="1" type="primary">ligA</name>
    <name type="ordered locus">Ping_2336</name>
</gene>
<comment type="function">
    <text evidence="1">DNA ligase that catalyzes the formation of phosphodiester linkages between 5'-phosphoryl and 3'-hydroxyl groups in double-stranded DNA using NAD as a coenzyme and as the energy source for the reaction. It is essential for DNA replication and repair of damaged DNA.</text>
</comment>
<comment type="catalytic activity">
    <reaction evidence="1">
        <text>NAD(+) + (deoxyribonucleotide)n-3'-hydroxyl + 5'-phospho-(deoxyribonucleotide)m = (deoxyribonucleotide)n+m + AMP + beta-nicotinamide D-nucleotide.</text>
        <dbReference type="EC" id="6.5.1.2"/>
    </reaction>
</comment>
<comment type="cofactor">
    <cofactor evidence="1">
        <name>Mg(2+)</name>
        <dbReference type="ChEBI" id="CHEBI:18420"/>
    </cofactor>
    <cofactor evidence="1">
        <name>Mn(2+)</name>
        <dbReference type="ChEBI" id="CHEBI:29035"/>
    </cofactor>
</comment>
<comment type="similarity">
    <text evidence="1">Belongs to the NAD-dependent DNA ligase family. LigA subfamily.</text>
</comment>
<feature type="chain" id="PRO_0000313385" description="DNA ligase">
    <location>
        <begin position="1"/>
        <end position="649"/>
    </location>
</feature>
<feature type="domain" description="BRCT" evidence="1">
    <location>
        <begin position="569"/>
        <end position="649"/>
    </location>
</feature>
<feature type="active site" description="N6-AMP-lysine intermediate" evidence="1">
    <location>
        <position position="142"/>
    </location>
</feature>
<feature type="binding site" evidence="1">
    <location>
        <begin position="62"/>
        <end position="66"/>
    </location>
    <ligand>
        <name>NAD(+)</name>
        <dbReference type="ChEBI" id="CHEBI:57540"/>
    </ligand>
</feature>
<feature type="binding site" evidence="1">
    <location>
        <begin position="104"/>
        <end position="105"/>
    </location>
    <ligand>
        <name>NAD(+)</name>
        <dbReference type="ChEBI" id="CHEBI:57540"/>
    </ligand>
</feature>
<feature type="binding site" evidence="1">
    <location>
        <position position="158"/>
    </location>
    <ligand>
        <name>NAD(+)</name>
        <dbReference type="ChEBI" id="CHEBI:57540"/>
    </ligand>
</feature>
<feature type="binding site" evidence="1">
    <location>
        <position position="189"/>
    </location>
    <ligand>
        <name>NAD(+)</name>
        <dbReference type="ChEBI" id="CHEBI:57540"/>
    </ligand>
</feature>
<feature type="binding site" evidence="1">
    <location>
        <position position="301"/>
    </location>
    <ligand>
        <name>NAD(+)</name>
        <dbReference type="ChEBI" id="CHEBI:57540"/>
    </ligand>
</feature>
<feature type="binding site" evidence="1">
    <location>
        <position position="389"/>
    </location>
    <ligand>
        <name>Zn(2+)</name>
        <dbReference type="ChEBI" id="CHEBI:29105"/>
    </ligand>
</feature>
<feature type="binding site" evidence="1">
    <location>
        <position position="392"/>
    </location>
    <ligand>
        <name>Zn(2+)</name>
        <dbReference type="ChEBI" id="CHEBI:29105"/>
    </ligand>
</feature>
<feature type="binding site" evidence="1">
    <location>
        <position position="405"/>
    </location>
    <ligand>
        <name>Zn(2+)</name>
        <dbReference type="ChEBI" id="CHEBI:29105"/>
    </ligand>
</feature>
<feature type="binding site" evidence="1">
    <location>
        <position position="411"/>
    </location>
    <ligand>
        <name>Zn(2+)</name>
        <dbReference type="ChEBI" id="CHEBI:29105"/>
    </ligand>
</feature>
<sequence length="649" mass="71532">MITLSKSQEEVFKKLAVELSMSKLIEACNKSVDFSSLNSNEQLDVLKVTNAFYRSAEQIINDSTYDAFLSEFSTYNPDHPYLLTVEPEVLADSKTVPLPKKMLSTDKAYSFEEIKKWIDRLLKAAIEVGVSESEIQIKVTPKLDGYAAYDDGISLYTRGDGARGQDITRAFNKGLQVANNGDRGLGPGEIVIKKSYFDTVLSDKFENSRNIQAAIIAEKKVDESIQKAIDVGACVFFPFLSLENWIGHYTEILVDFESIVEKMWSAVDYDIDGVVLEVTNETLKEHMGATRHHHRWQIAFKVNAESAEVKVLNVTPQTSRTGRVTPVAELEPTKLSGATISRATVHHYNMVKTNGVGPGAIVQLVRSGLVIPKIEKVIKAVEPQLAKECPSCGTHLIWESDHLVCPNKTDCPAQTENTLVHFFKTLGNNDGFGPKVIEKLHEFGIKKIHEIYELKQESFVSFGFGDKTAQNLVEQLQVSRDVEIEDWRFLAAFGVSRLAGGNCEKLLQHHSLDSLFEATVEDLVQLDGFAQVSADAIVEGLANIKEEFLKLSALNFNLTITPKASEKSPGETPVFGKIIVFTGAMTQGSRGDMEKQAKALGAKVAKSVTGKTSLLVTGDKVGANKINAARDKGVQVLSELDYLALISTY</sequence>
<name>DNLJ_PSYIN</name>
<evidence type="ECO:0000255" key="1">
    <source>
        <dbReference type="HAMAP-Rule" id="MF_01588"/>
    </source>
</evidence>
<protein>
    <recommendedName>
        <fullName evidence="1">DNA ligase</fullName>
        <ecNumber evidence="1">6.5.1.2</ecNumber>
    </recommendedName>
    <alternativeName>
        <fullName evidence="1">Polydeoxyribonucleotide synthase [NAD(+)]</fullName>
    </alternativeName>
</protein>
<proteinExistence type="inferred from homology"/>
<organism>
    <name type="scientific">Psychromonas ingrahamii (strain DSM 17664 / CCUG 51855 / 37)</name>
    <dbReference type="NCBI Taxonomy" id="357804"/>
    <lineage>
        <taxon>Bacteria</taxon>
        <taxon>Pseudomonadati</taxon>
        <taxon>Pseudomonadota</taxon>
        <taxon>Gammaproteobacteria</taxon>
        <taxon>Alteromonadales</taxon>
        <taxon>Psychromonadaceae</taxon>
        <taxon>Psychromonas</taxon>
    </lineage>
</organism>
<dbReference type="EC" id="6.5.1.2" evidence="1"/>
<dbReference type="EMBL" id="CP000510">
    <property type="protein sequence ID" value="ABM04076.1"/>
    <property type="molecule type" value="Genomic_DNA"/>
</dbReference>
<dbReference type="SMR" id="A1SX61"/>
<dbReference type="STRING" id="357804.Ping_2336"/>
<dbReference type="KEGG" id="pin:Ping_2336"/>
<dbReference type="eggNOG" id="COG0272">
    <property type="taxonomic scope" value="Bacteria"/>
</dbReference>
<dbReference type="HOGENOM" id="CLU_007764_2_0_6"/>
<dbReference type="OrthoDB" id="9759736at2"/>
<dbReference type="Proteomes" id="UP000000639">
    <property type="component" value="Chromosome"/>
</dbReference>
<dbReference type="GO" id="GO:0003911">
    <property type="term" value="F:DNA ligase (NAD+) activity"/>
    <property type="evidence" value="ECO:0007669"/>
    <property type="project" value="UniProtKB-UniRule"/>
</dbReference>
<dbReference type="GO" id="GO:0046872">
    <property type="term" value="F:metal ion binding"/>
    <property type="evidence" value="ECO:0007669"/>
    <property type="project" value="UniProtKB-KW"/>
</dbReference>
<dbReference type="GO" id="GO:0006281">
    <property type="term" value="P:DNA repair"/>
    <property type="evidence" value="ECO:0007669"/>
    <property type="project" value="UniProtKB-KW"/>
</dbReference>
<dbReference type="GO" id="GO:0006260">
    <property type="term" value="P:DNA replication"/>
    <property type="evidence" value="ECO:0007669"/>
    <property type="project" value="UniProtKB-KW"/>
</dbReference>
<dbReference type="CDD" id="cd17748">
    <property type="entry name" value="BRCT_DNA_ligase_like"/>
    <property type="match status" value="1"/>
</dbReference>
<dbReference type="Gene3D" id="1.10.150.20">
    <property type="entry name" value="5' to 3' exonuclease, C-terminal subdomain"/>
    <property type="match status" value="2"/>
</dbReference>
<dbReference type="Gene3D" id="3.40.50.10190">
    <property type="entry name" value="BRCT domain"/>
    <property type="match status" value="1"/>
</dbReference>
<dbReference type="Gene3D" id="3.30.470.30">
    <property type="entry name" value="DNA ligase/mRNA capping enzyme"/>
    <property type="match status" value="2"/>
</dbReference>
<dbReference type="Gene3D" id="2.40.50.140">
    <property type="entry name" value="Nucleic acid-binding proteins"/>
    <property type="match status" value="1"/>
</dbReference>
<dbReference type="HAMAP" id="MF_01588">
    <property type="entry name" value="DNA_ligase_A"/>
    <property type="match status" value="1"/>
</dbReference>
<dbReference type="InterPro" id="IPR001357">
    <property type="entry name" value="BRCT_dom"/>
</dbReference>
<dbReference type="InterPro" id="IPR036420">
    <property type="entry name" value="BRCT_dom_sf"/>
</dbReference>
<dbReference type="InterPro" id="IPR001679">
    <property type="entry name" value="DNA_ligase"/>
</dbReference>
<dbReference type="InterPro" id="IPR013839">
    <property type="entry name" value="DNAligase_adenylation"/>
</dbReference>
<dbReference type="InterPro" id="IPR013840">
    <property type="entry name" value="DNAligase_N"/>
</dbReference>
<dbReference type="InterPro" id="IPR012340">
    <property type="entry name" value="NA-bd_OB-fold"/>
</dbReference>
<dbReference type="InterPro" id="IPR004150">
    <property type="entry name" value="NAD_DNA_ligase_OB"/>
</dbReference>
<dbReference type="InterPro" id="IPR010994">
    <property type="entry name" value="RuvA_2-like"/>
</dbReference>
<dbReference type="Pfam" id="PF00533">
    <property type="entry name" value="BRCT"/>
    <property type="match status" value="1"/>
</dbReference>
<dbReference type="Pfam" id="PF01653">
    <property type="entry name" value="DNA_ligase_aden"/>
    <property type="match status" value="2"/>
</dbReference>
<dbReference type="Pfam" id="PF03120">
    <property type="entry name" value="DNA_ligase_OB"/>
    <property type="match status" value="1"/>
</dbReference>
<dbReference type="Pfam" id="PF14520">
    <property type="entry name" value="HHH_5"/>
    <property type="match status" value="1"/>
</dbReference>
<dbReference type="PIRSF" id="PIRSF001604">
    <property type="entry name" value="LigA"/>
    <property type="match status" value="1"/>
</dbReference>
<dbReference type="SMART" id="SM00292">
    <property type="entry name" value="BRCT"/>
    <property type="match status" value="1"/>
</dbReference>
<dbReference type="SMART" id="SM00532">
    <property type="entry name" value="LIGANc"/>
    <property type="match status" value="1"/>
</dbReference>
<dbReference type="SUPFAM" id="SSF52113">
    <property type="entry name" value="BRCT domain"/>
    <property type="match status" value="1"/>
</dbReference>
<dbReference type="SUPFAM" id="SSF56091">
    <property type="entry name" value="DNA ligase/mRNA capping enzyme, catalytic domain"/>
    <property type="match status" value="1"/>
</dbReference>
<dbReference type="SUPFAM" id="SSF50249">
    <property type="entry name" value="Nucleic acid-binding proteins"/>
    <property type="match status" value="1"/>
</dbReference>
<dbReference type="SUPFAM" id="SSF47781">
    <property type="entry name" value="RuvA domain 2-like"/>
    <property type="match status" value="1"/>
</dbReference>
<dbReference type="PROSITE" id="PS50172">
    <property type="entry name" value="BRCT"/>
    <property type="match status" value="1"/>
</dbReference>
<keyword id="KW-0227">DNA damage</keyword>
<keyword id="KW-0234">DNA repair</keyword>
<keyword id="KW-0235">DNA replication</keyword>
<keyword id="KW-0436">Ligase</keyword>
<keyword id="KW-0460">Magnesium</keyword>
<keyword id="KW-0464">Manganese</keyword>
<keyword id="KW-0479">Metal-binding</keyword>
<keyword id="KW-0520">NAD</keyword>
<keyword id="KW-1185">Reference proteome</keyword>
<keyword id="KW-0862">Zinc</keyword>